<dbReference type="EMBL" id="DQ317523">
    <property type="protein sequence ID" value="ABC25138.1"/>
    <property type="molecule type" value="Genomic_DNA"/>
</dbReference>
<dbReference type="RefSeq" id="YP_538778.1">
    <property type="nucleotide sequence ID" value="NC_007942.1"/>
</dbReference>
<dbReference type="SMR" id="Q2PMS0"/>
<dbReference type="FunCoup" id="Q2PMS0">
    <property type="interactions" value="47"/>
</dbReference>
<dbReference type="STRING" id="3847.Q2PMS0"/>
<dbReference type="PaxDb" id="3847-GLYMA12G36141.1"/>
<dbReference type="EnsemblPlants" id="KRH27389">
    <property type="protein sequence ID" value="KRH27389"/>
    <property type="gene ID" value="GLYMA_12G232800"/>
</dbReference>
<dbReference type="GeneID" id="3989310"/>
<dbReference type="Gramene" id="KRH27389">
    <property type="protein sequence ID" value="KRH27389"/>
    <property type="gene ID" value="GLYMA_12G232800"/>
</dbReference>
<dbReference type="KEGG" id="gmx:3989310"/>
<dbReference type="eggNOG" id="ENOG502SBI8">
    <property type="taxonomic scope" value="Eukaryota"/>
</dbReference>
<dbReference type="HOGENOM" id="CLU_215151_0_0_1"/>
<dbReference type="InParanoid" id="Q2PMS0"/>
<dbReference type="Proteomes" id="UP000008827">
    <property type="component" value="Chloroplast"/>
</dbReference>
<dbReference type="GO" id="GO:0009535">
    <property type="term" value="C:chloroplast thylakoid membrane"/>
    <property type="evidence" value="ECO:0007669"/>
    <property type="project" value="UniProtKB-SubCell"/>
</dbReference>
<dbReference type="GO" id="GO:0009523">
    <property type="term" value="C:photosystem II"/>
    <property type="evidence" value="ECO:0000318"/>
    <property type="project" value="GO_Central"/>
</dbReference>
<dbReference type="GO" id="GO:0009539">
    <property type="term" value="C:photosystem II reaction center"/>
    <property type="evidence" value="ECO:0007669"/>
    <property type="project" value="InterPro"/>
</dbReference>
<dbReference type="GO" id="GO:0015979">
    <property type="term" value="P:photosynthesis"/>
    <property type="evidence" value="ECO:0007669"/>
    <property type="project" value="UniProtKB-UniRule"/>
</dbReference>
<dbReference type="Gene3D" id="6.10.250.2070">
    <property type="match status" value="1"/>
</dbReference>
<dbReference type="HAMAP" id="MF_01305">
    <property type="entry name" value="PSII_PsbJ"/>
    <property type="match status" value="1"/>
</dbReference>
<dbReference type="InterPro" id="IPR002682">
    <property type="entry name" value="PSII_PsbJ"/>
</dbReference>
<dbReference type="InterPro" id="IPR037267">
    <property type="entry name" value="PSII_PsbJ_sf"/>
</dbReference>
<dbReference type="NCBIfam" id="NF002722">
    <property type="entry name" value="PRK02565.1"/>
    <property type="match status" value="1"/>
</dbReference>
<dbReference type="PANTHER" id="PTHR34812">
    <property type="entry name" value="PHOTOSYSTEM II REACTION CENTER PROTEIN J"/>
    <property type="match status" value="1"/>
</dbReference>
<dbReference type="PANTHER" id="PTHR34812:SF3">
    <property type="entry name" value="PHOTOSYSTEM II REACTION CENTER PROTEIN J"/>
    <property type="match status" value="1"/>
</dbReference>
<dbReference type="Pfam" id="PF01788">
    <property type="entry name" value="PsbJ"/>
    <property type="match status" value="1"/>
</dbReference>
<dbReference type="SUPFAM" id="SSF161021">
    <property type="entry name" value="Photosystem II reaction center protein J, PsbJ"/>
    <property type="match status" value="1"/>
</dbReference>
<name>PSBJ_SOYBN</name>
<proteinExistence type="inferred from homology"/>
<keyword id="KW-0150">Chloroplast</keyword>
<keyword id="KW-0472">Membrane</keyword>
<keyword id="KW-0602">Photosynthesis</keyword>
<keyword id="KW-0604">Photosystem II</keyword>
<keyword id="KW-0934">Plastid</keyword>
<keyword id="KW-0674">Reaction center</keyword>
<keyword id="KW-1185">Reference proteome</keyword>
<keyword id="KW-0793">Thylakoid</keyword>
<keyword id="KW-0812">Transmembrane</keyword>
<keyword id="KW-1133">Transmembrane helix</keyword>
<sequence length="40" mass="4149">MADTTGRIPLWIIGTVTGITVIGLIGIFFYGSYSGLGSSL</sequence>
<organism>
    <name type="scientific">Glycine max</name>
    <name type="common">Soybean</name>
    <name type="synonym">Glycine hispida</name>
    <dbReference type="NCBI Taxonomy" id="3847"/>
    <lineage>
        <taxon>Eukaryota</taxon>
        <taxon>Viridiplantae</taxon>
        <taxon>Streptophyta</taxon>
        <taxon>Embryophyta</taxon>
        <taxon>Tracheophyta</taxon>
        <taxon>Spermatophyta</taxon>
        <taxon>Magnoliopsida</taxon>
        <taxon>eudicotyledons</taxon>
        <taxon>Gunneridae</taxon>
        <taxon>Pentapetalae</taxon>
        <taxon>rosids</taxon>
        <taxon>fabids</taxon>
        <taxon>Fabales</taxon>
        <taxon>Fabaceae</taxon>
        <taxon>Papilionoideae</taxon>
        <taxon>50 kb inversion clade</taxon>
        <taxon>NPAAA clade</taxon>
        <taxon>indigoferoid/millettioid clade</taxon>
        <taxon>Phaseoleae</taxon>
        <taxon>Glycine</taxon>
        <taxon>Glycine subgen. Soja</taxon>
    </lineage>
</organism>
<protein>
    <recommendedName>
        <fullName evidence="1">Photosystem II reaction center protein J</fullName>
        <shortName evidence="1">PSII-J</shortName>
    </recommendedName>
</protein>
<reference key="1">
    <citation type="journal article" date="2005" name="Plant Mol. Biol.">
        <title>Complete chloroplast genome sequence of Glycine max and comparative analyses with other legume genomes.</title>
        <authorList>
            <person name="Saski C."/>
            <person name="Lee S.-B."/>
            <person name="Daniell H."/>
            <person name="Wood T.C."/>
            <person name="Tomkins J."/>
            <person name="Kim H.-G."/>
            <person name="Jansen R.K."/>
        </authorList>
    </citation>
    <scope>NUCLEOTIDE SEQUENCE [LARGE SCALE GENOMIC DNA]</scope>
    <source>
        <strain>cv. PI 437654</strain>
    </source>
</reference>
<gene>
    <name evidence="1" type="primary">psbJ</name>
</gene>
<evidence type="ECO:0000255" key="1">
    <source>
        <dbReference type="HAMAP-Rule" id="MF_01305"/>
    </source>
</evidence>
<accession>Q2PMS0</accession>
<feature type="chain" id="PRO_0000276095" description="Photosystem II reaction center protein J">
    <location>
        <begin position="1"/>
        <end position="40"/>
    </location>
</feature>
<feature type="transmembrane region" description="Helical" evidence="1">
    <location>
        <begin position="8"/>
        <end position="28"/>
    </location>
</feature>
<geneLocation type="chloroplast"/>
<comment type="function">
    <text evidence="1">One of the components of the core complex of photosystem II (PSII). PSII is a light-driven water:plastoquinone oxidoreductase that uses light energy to abstract electrons from H(2)O, generating O(2) and a proton gradient subsequently used for ATP formation. It consists of a core antenna complex that captures photons, and an electron transfer chain that converts photonic excitation into a charge separation.</text>
</comment>
<comment type="subunit">
    <text evidence="1">PSII is composed of 1 copy each of membrane proteins PsbA, PsbB, PsbC, PsbD, PsbE, PsbF, PsbH, PsbI, PsbJ, PsbK, PsbL, PsbM, PsbT, PsbX, PsbY, PsbZ, Psb30/Ycf12, at least 3 peripheral proteins of the oxygen-evolving complex and a large number of cofactors. It forms dimeric complexes.</text>
</comment>
<comment type="subcellular location">
    <subcellularLocation>
        <location evidence="1">Plastid</location>
        <location evidence="1">Chloroplast thylakoid membrane</location>
        <topology evidence="1">Single-pass membrane protein</topology>
    </subcellularLocation>
</comment>
<comment type="similarity">
    <text evidence="1">Belongs to the PsbJ family.</text>
</comment>